<gene>
    <name evidence="1" type="primary">xseB</name>
    <name type="ordered locus">PSEEN0602</name>
</gene>
<evidence type="ECO:0000255" key="1">
    <source>
        <dbReference type="HAMAP-Rule" id="MF_00337"/>
    </source>
</evidence>
<comment type="function">
    <text evidence="1">Bidirectionally degrades single-stranded DNA into large acid-insoluble oligonucleotides, which are then degraded further into small acid-soluble oligonucleotides.</text>
</comment>
<comment type="catalytic activity">
    <reaction evidence="1">
        <text>Exonucleolytic cleavage in either 5'- to 3'- or 3'- to 5'-direction to yield nucleoside 5'-phosphates.</text>
        <dbReference type="EC" id="3.1.11.6"/>
    </reaction>
</comment>
<comment type="subunit">
    <text evidence="1">Heterooligomer composed of large and small subunits.</text>
</comment>
<comment type="subcellular location">
    <subcellularLocation>
        <location evidence="1">Cytoplasm</location>
    </subcellularLocation>
</comment>
<comment type="similarity">
    <text evidence="1">Belongs to the XseB family.</text>
</comment>
<dbReference type="EC" id="3.1.11.6" evidence="1"/>
<dbReference type="EMBL" id="CT573326">
    <property type="protein sequence ID" value="CAK13545.1"/>
    <property type="molecule type" value="Genomic_DNA"/>
</dbReference>
<dbReference type="RefSeq" id="WP_011531978.1">
    <property type="nucleotide sequence ID" value="NC_008027.1"/>
</dbReference>
<dbReference type="SMR" id="Q1IFK9"/>
<dbReference type="STRING" id="384676.PSEEN0602"/>
<dbReference type="KEGG" id="pen:PSEEN0602"/>
<dbReference type="eggNOG" id="COG1722">
    <property type="taxonomic scope" value="Bacteria"/>
</dbReference>
<dbReference type="HOGENOM" id="CLU_145918_3_3_6"/>
<dbReference type="OrthoDB" id="9801128at2"/>
<dbReference type="Proteomes" id="UP000000658">
    <property type="component" value="Chromosome"/>
</dbReference>
<dbReference type="GO" id="GO:0005829">
    <property type="term" value="C:cytosol"/>
    <property type="evidence" value="ECO:0007669"/>
    <property type="project" value="TreeGrafter"/>
</dbReference>
<dbReference type="GO" id="GO:0009318">
    <property type="term" value="C:exodeoxyribonuclease VII complex"/>
    <property type="evidence" value="ECO:0007669"/>
    <property type="project" value="InterPro"/>
</dbReference>
<dbReference type="GO" id="GO:0008855">
    <property type="term" value="F:exodeoxyribonuclease VII activity"/>
    <property type="evidence" value="ECO:0007669"/>
    <property type="project" value="UniProtKB-UniRule"/>
</dbReference>
<dbReference type="GO" id="GO:0006308">
    <property type="term" value="P:DNA catabolic process"/>
    <property type="evidence" value="ECO:0007669"/>
    <property type="project" value="UniProtKB-UniRule"/>
</dbReference>
<dbReference type="Gene3D" id="1.10.287.1040">
    <property type="entry name" value="Exonuclease VII, small subunit"/>
    <property type="match status" value="1"/>
</dbReference>
<dbReference type="HAMAP" id="MF_00337">
    <property type="entry name" value="Exonuc_7_S"/>
    <property type="match status" value="1"/>
</dbReference>
<dbReference type="InterPro" id="IPR003761">
    <property type="entry name" value="Exonuc_VII_S"/>
</dbReference>
<dbReference type="InterPro" id="IPR037004">
    <property type="entry name" value="Exonuc_VII_ssu_sf"/>
</dbReference>
<dbReference type="NCBIfam" id="NF002140">
    <property type="entry name" value="PRK00977.1-4"/>
    <property type="match status" value="1"/>
</dbReference>
<dbReference type="NCBIfam" id="TIGR01280">
    <property type="entry name" value="xseB"/>
    <property type="match status" value="1"/>
</dbReference>
<dbReference type="PANTHER" id="PTHR34137">
    <property type="entry name" value="EXODEOXYRIBONUCLEASE 7 SMALL SUBUNIT"/>
    <property type="match status" value="1"/>
</dbReference>
<dbReference type="PANTHER" id="PTHR34137:SF1">
    <property type="entry name" value="EXODEOXYRIBONUCLEASE 7 SMALL SUBUNIT"/>
    <property type="match status" value="1"/>
</dbReference>
<dbReference type="Pfam" id="PF02609">
    <property type="entry name" value="Exonuc_VII_S"/>
    <property type="match status" value="1"/>
</dbReference>
<dbReference type="PIRSF" id="PIRSF006488">
    <property type="entry name" value="Exonuc_VII_S"/>
    <property type="match status" value="1"/>
</dbReference>
<dbReference type="SUPFAM" id="SSF116842">
    <property type="entry name" value="XseB-like"/>
    <property type="match status" value="1"/>
</dbReference>
<sequence>MARKKASIDFEQSLADLQALVERLENGELSLEESLAAFEQGIALTRDCQGALAQAEQKVQILLERDGELAAQPFDAEPEA</sequence>
<name>EX7S_PSEE4</name>
<proteinExistence type="inferred from homology"/>
<accession>Q1IFK9</accession>
<protein>
    <recommendedName>
        <fullName evidence="1">Exodeoxyribonuclease 7 small subunit</fullName>
        <ecNumber evidence="1">3.1.11.6</ecNumber>
    </recommendedName>
    <alternativeName>
        <fullName evidence="1">Exodeoxyribonuclease VII small subunit</fullName>
        <shortName evidence="1">Exonuclease VII small subunit</shortName>
    </alternativeName>
</protein>
<reference key="1">
    <citation type="journal article" date="2006" name="Nat. Biotechnol.">
        <title>Complete genome sequence of the entomopathogenic and metabolically versatile soil bacterium Pseudomonas entomophila.</title>
        <authorList>
            <person name="Vodovar N."/>
            <person name="Vallenet D."/>
            <person name="Cruveiller S."/>
            <person name="Rouy Z."/>
            <person name="Barbe V."/>
            <person name="Acosta C."/>
            <person name="Cattolico L."/>
            <person name="Jubin C."/>
            <person name="Lajus A."/>
            <person name="Segurens B."/>
            <person name="Vacherie B."/>
            <person name="Wincker P."/>
            <person name="Weissenbach J."/>
            <person name="Lemaitre B."/>
            <person name="Medigue C."/>
            <person name="Boccard F."/>
        </authorList>
    </citation>
    <scope>NUCLEOTIDE SEQUENCE [LARGE SCALE GENOMIC DNA]</scope>
    <source>
        <strain>L48</strain>
    </source>
</reference>
<organism>
    <name type="scientific">Pseudomonas entomophila (strain L48)</name>
    <dbReference type="NCBI Taxonomy" id="384676"/>
    <lineage>
        <taxon>Bacteria</taxon>
        <taxon>Pseudomonadati</taxon>
        <taxon>Pseudomonadota</taxon>
        <taxon>Gammaproteobacteria</taxon>
        <taxon>Pseudomonadales</taxon>
        <taxon>Pseudomonadaceae</taxon>
        <taxon>Pseudomonas</taxon>
    </lineage>
</organism>
<keyword id="KW-0963">Cytoplasm</keyword>
<keyword id="KW-0269">Exonuclease</keyword>
<keyword id="KW-0378">Hydrolase</keyword>
<keyword id="KW-0540">Nuclease</keyword>
<feature type="chain" id="PRO_0000303735" description="Exodeoxyribonuclease 7 small subunit">
    <location>
        <begin position="1"/>
        <end position="80"/>
    </location>
</feature>